<evidence type="ECO:0000255" key="1">
    <source>
        <dbReference type="HAMAP-Rule" id="MF_00537"/>
    </source>
</evidence>
<evidence type="ECO:0000305" key="2"/>
<organism>
    <name type="scientific">Coffea arabica</name>
    <name type="common">Arabian coffee</name>
    <dbReference type="NCBI Taxonomy" id="13443"/>
    <lineage>
        <taxon>Eukaryota</taxon>
        <taxon>Viridiplantae</taxon>
        <taxon>Streptophyta</taxon>
        <taxon>Embryophyta</taxon>
        <taxon>Tracheophyta</taxon>
        <taxon>Spermatophyta</taxon>
        <taxon>Magnoliopsida</taxon>
        <taxon>eudicotyledons</taxon>
        <taxon>Gunneridae</taxon>
        <taxon>Pentapetalae</taxon>
        <taxon>asterids</taxon>
        <taxon>lamiids</taxon>
        <taxon>Gentianales</taxon>
        <taxon>Rubiaceae</taxon>
        <taxon>Ixoroideae</taxon>
        <taxon>Gardenieae complex</taxon>
        <taxon>Bertiereae - Coffeeae clade</taxon>
        <taxon>Coffeeae</taxon>
        <taxon>Coffea</taxon>
    </lineage>
</organism>
<protein>
    <recommendedName>
        <fullName evidence="1">Small ribosomal subunit protein uS14c</fullName>
    </recommendedName>
    <alternativeName>
        <fullName evidence="2">30S ribosomal protein S14, chloroplastic</fullName>
    </alternativeName>
</protein>
<reference key="1">
    <citation type="journal article" date="2007" name="Plant Biotechnol. J.">
        <title>The complete nucleotide sequence of the coffee (Coffea arabica L.) chloroplast genome: organization and implications for biotechnology and phylogenetic relationships amongst angiosperms.</title>
        <authorList>
            <person name="Samson N."/>
            <person name="Bausher M.G."/>
            <person name="Lee S.-B."/>
            <person name="Jansen R.K."/>
            <person name="Daniell H."/>
        </authorList>
    </citation>
    <scope>NUCLEOTIDE SEQUENCE [LARGE SCALE GENOMIC DNA]</scope>
</reference>
<keyword id="KW-0150">Chloroplast</keyword>
<keyword id="KW-0934">Plastid</keyword>
<keyword id="KW-1185">Reference proteome</keyword>
<keyword id="KW-0687">Ribonucleoprotein</keyword>
<keyword id="KW-0689">Ribosomal protein</keyword>
<keyword id="KW-0694">RNA-binding</keyword>
<keyword id="KW-0699">rRNA-binding</keyword>
<gene>
    <name evidence="1" type="primary">rps14</name>
</gene>
<geneLocation type="chloroplast"/>
<dbReference type="EMBL" id="EF044213">
    <property type="protein sequence ID" value="ABJ89677.1"/>
    <property type="molecule type" value="Genomic_DNA"/>
</dbReference>
<dbReference type="RefSeq" id="YP_817480.1">
    <property type="nucleotide sequence ID" value="NC_008535.1"/>
</dbReference>
<dbReference type="SMR" id="A0A333"/>
<dbReference type="GeneID" id="4421874"/>
<dbReference type="OrthoDB" id="413436at2759"/>
<dbReference type="Proteomes" id="UP000515148">
    <property type="component" value="Chloroplast Pltd"/>
</dbReference>
<dbReference type="GO" id="GO:0009507">
    <property type="term" value="C:chloroplast"/>
    <property type="evidence" value="ECO:0007669"/>
    <property type="project" value="UniProtKB-SubCell"/>
</dbReference>
<dbReference type="GO" id="GO:0015935">
    <property type="term" value="C:small ribosomal subunit"/>
    <property type="evidence" value="ECO:0007669"/>
    <property type="project" value="TreeGrafter"/>
</dbReference>
<dbReference type="GO" id="GO:0019843">
    <property type="term" value="F:rRNA binding"/>
    <property type="evidence" value="ECO:0007669"/>
    <property type="project" value="UniProtKB-UniRule"/>
</dbReference>
<dbReference type="GO" id="GO:0003735">
    <property type="term" value="F:structural constituent of ribosome"/>
    <property type="evidence" value="ECO:0007669"/>
    <property type="project" value="InterPro"/>
</dbReference>
<dbReference type="GO" id="GO:0006412">
    <property type="term" value="P:translation"/>
    <property type="evidence" value="ECO:0007669"/>
    <property type="project" value="UniProtKB-UniRule"/>
</dbReference>
<dbReference type="FunFam" id="1.10.287.1480:FF:000001">
    <property type="entry name" value="30S ribosomal protein S14"/>
    <property type="match status" value="1"/>
</dbReference>
<dbReference type="Gene3D" id="1.10.287.1480">
    <property type="match status" value="1"/>
</dbReference>
<dbReference type="HAMAP" id="MF_00537">
    <property type="entry name" value="Ribosomal_uS14_1"/>
    <property type="match status" value="1"/>
</dbReference>
<dbReference type="InterPro" id="IPR001209">
    <property type="entry name" value="Ribosomal_uS14"/>
</dbReference>
<dbReference type="InterPro" id="IPR023036">
    <property type="entry name" value="Ribosomal_uS14_bac/plastid"/>
</dbReference>
<dbReference type="InterPro" id="IPR018271">
    <property type="entry name" value="Ribosomal_uS14_CS"/>
</dbReference>
<dbReference type="NCBIfam" id="NF006477">
    <property type="entry name" value="PRK08881.1"/>
    <property type="match status" value="1"/>
</dbReference>
<dbReference type="PANTHER" id="PTHR19836">
    <property type="entry name" value="30S RIBOSOMAL PROTEIN S14"/>
    <property type="match status" value="1"/>
</dbReference>
<dbReference type="PANTHER" id="PTHR19836:SF19">
    <property type="entry name" value="SMALL RIBOSOMAL SUBUNIT PROTEIN US14M"/>
    <property type="match status" value="1"/>
</dbReference>
<dbReference type="Pfam" id="PF00253">
    <property type="entry name" value="Ribosomal_S14"/>
    <property type="match status" value="1"/>
</dbReference>
<dbReference type="SUPFAM" id="SSF57716">
    <property type="entry name" value="Glucocorticoid receptor-like (DNA-binding domain)"/>
    <property type="match status" value="1"/>
</dbReference>
<dbReference type="PROSITE" id="PS00527">
    <property type="entry name" value="RIBOSOMAL_S14"/>
    <property type="match status" value="1"/>
</dbReference>
<proteinExistence type="inferred from homology"/>
<name>RR14_COFAR</name>
<feature type="chain" id="PRO_0000276672" description="Small ribosomal subunit protein uS14c">
    <location>
        <begin position="1"/>
        <end position="100"/>
    </location>
</feature>
<accession>A0A333</accession>
<sequence length="100" mass="11910">MARKGLIQREKKRQKLEQKYHLIRRSSKKEISKVQSLNDKWEIYRKLQSPPRNSAPTRLHRRCFATGRPRANYRDFGLSGHILREMVHACLLPGARRSSW</sequence>
<comment type="function">
    <text evidence="1">Binds 16S rRNA, required for the assembly of 30S particles.</text>
</comment>
<comment type="subunit">
    <text evidence="1">Part of the 30S ribosomal subunit.</text>
</comment>
<comment type="subcellular location">
    <subcellularLocation>
        <location>Plastid</location>
        <location>Chloroplast</location>
    </subcellularLocation>
</comment>
<comment type="similarity">
    <text evidence="1">Belongs to the universal ribosomal protein uS14 family.</text>
</comment>